<dbReference type="EC" id="3.1.4.-" evidence="7 11 13"/>
<dbReference type="EMBL" id="BX161451">
    <property type="protein sequence ID" value="CAD61915.1"/>
    <property type="molecule type" value="mRNA"/>
</dbReference>
<dbReference type="EMBL" id="AK001952">
    <property type="protein sequence ID" value="BAA91997.1"/>
    <property type="molecule type" value="mRNA"/>
</dbReference>
<dbReference type="EMBL" id="DQ367843">
    <property type="protein sequence ID" value="ABC79301.1"/>
    <property type="molecule type" value="Genomic_DNA"/>
</dbReference>
<dbReference type="EMBL" id="AL137128">
    <property type="status" value="NOT_ANNOTATED_CDS"/>
    <property type="molecule type" value="Genomic_DNA"/>
</dbReference>
<dbReference type="EMBL" id="BC015474">
    <property type="protein sequence ID" value="AAH15474.1"/>
    <property type="molecule type" value="mRNA"/>
</dbReference>
<dbReference type="EMBL" id="AF182002">
    <property type="protein sequence ID" value="AAF65623.1"/>
    <property type="molecule type" value="mRNA"/>
</dbReference>
<dbReference type="EMBL" id="AF182003">
    <property type="protein sequence ID" value="AAF65624.1"/>
    <property type="molecule type" value="mRNA"/>
</dbReference>
<dbReference type="CCDS" id="CCDS9888.1">
    <molecule id="Q9NUW8-1"/>
</dbReference>
<dbReference type="RefSeq" id="NP_001008744.1">
    <molecule id="Q9NUW8-1"/>
    <property type="nucleotide sequence ID" value="NM_001008744.2"/>
</dbReference>
<dbReference type="RefSeq" id="NP_060789.2">
    <molecule id="Q9NUW8-1"/>
    <property type="nucleotide sequence ID" value="NM_018319.3"/>
</dbReference>
<dbReference type="RefSeq" id="XP_005267904.1">
    <property type="nucleotide sequence ID" value="XM_005267847.2"/>
</dbReference>
<dbReference type="RefSeq" id="XP_005267905.1">
    <molecule id="Q9NUW8-1"/>
    <property type="nucleotide sequence ID" value="XM_005267848.4"/>
</dbReference>
<dbReference type="RefSeq" id="XP_006720260.1">
    <molecule id="Q9NUW8-1"/>
    <property type="nucleotide sequence ID" value="XM_006720197.5"/>
</dbReference>
<dbReference type="RefSeq" id="XP_006720261.1">
    <property type="nucleotide sequence ID" value="XM_006720198.3"/>
</dbReference>
<dbReference type="RefSeq" id="XP_011535244.1">
    <molecule id="Q9NUW8-1"/>
    <property type="nucleotide sequence ID" value="XM_011536942.4"/>
</dbReference>
<dbReference type="RefSeq" id="XP_011535245.1">
    <property type="nucleotide sequence ID" value="XM_011536943.2"/>
</dbReference>
<dbReference type="RefSeq" id="XP_016876928.1">
    <property type="nucleotide sequence ID" value="XM_017021439.1"/>
</dbReference>
<dbReference type="RefSeq" id="XP_016876931.1">
    <property type="nucleotide sequence ID" value="XM_017021442.1"/>
</dbReference>
<dbReference type="RefSeq" id="XP_016876932.1">
    <property type="nucleotide sequence ID" value="XM_017021443.1"/>
</dbReference>
<dbReference type="RefSeq" id="XP_016876933.1">
    <property type="nucleotide sequence ID" value="XM_017021444.1"/>
</dbReference>
<dbReference type="RefSeq" id="XP_047287524.1">
    <molecule id="Q9NUW8-1"/>
    <property type="nucleotide sequence ID" value="XM_047431568.1"/>
</dbReference>
<dbReference type="RefSeq" id="XP_047287525.1">
    <molecule id="Q9NUW8-1"/>
    <property type="nucleotide sequence ID" value="XM_047431569.1"/>
</dbReference>
<dbReference type="RefSeq" id="XP_047287526.1">
    <molecule id="Q9NUW8-1"/>
    <property type="nucleotide sequence ID" value="XM_047431570.1"/>
</dbReference>
<dbReference type="RefSeq" id="XP_047287528.1">
    <molecule id="Q9NUW8-1"/>
    <property type="nucleotide sequence ID" value="XM_047431572.1"/>
</dbReference>
<dbReference type="RefSeq" id="XP_047287529.1">
    <molecule id="Q9NUW8-1"/>
    <property type="nucleotide sequence ID" value="XM_047431573.1"/>
</dbReference>
<dbReference type="RefSeq" id="XP_047287530.1">
    <molecule id="Q9NUW8-1"/>
    <property type="nucleotide sequence ID" value="XM_047431574.1"/>
</dbReference>
<dbReference type="RefSeq" id="XP_047287531.1">
    <molecule id="Q9NUW8-1"/>
    <property type="nucleotide sequence ID" value="XM_047431575.1"/>
</dbReference>
<dbReference type="RefSeq" id="XP_047287534.1">
    <molecule id="Q9NUW8-2"/>
    <property type="nucleotide sequence ID" value="XM_047431578.1"/>
</dbReference>
<dbReference type="RefSeq" id="XP_054232334.1">
    <molecule id="Q9NUW8-1"/>
    <property type="nucleotide sequence ID" value="XM_054376359.1"/>
</dbReference>
<dbReference type="RefSeq" id="XP_054232335.1">
    <molecule id="Q9NUW8-1"/>
    <property type="nucleotide sequence ID" value="XM_054376360.1"/>
</dbReference>
<dbReference type="RefSeq" id="XP_054232336.1">
    <molecule id="Q9NUW8-1"/>
    <property type="nucleotide sequence ID" value="XM_054376361.1"/>
</dbReference>
<dbReference type="RefSeq" id="XP_054232337.1">
    <molecule id="Q9NUW8-1"/>
    <property type="nucleotide sequence ID" value="XM_054376362.1"/>
</dbReference>
<dbReference type="RefSeq" id="XP_054232338.1">
    <molecule id="Q9NUW8-1"/>
    <property type="nucleotide sequence ID" value="XM_054376363.1"/>
</dbReference>
<dbReference type="RefSeq" id="XP_054232339.1">
    <molecule id="Q9NUW8-1"/>
    <property type="nucleotide sequence ID" value="XM_054376364.1"/>
</dbReference>
<dbReference type="RefSeq" id="XP_054232340.1">
    <molecule id="Q9NUW8-1"/>
    <property type="nucleotide sequence ID" value="XM_054376365.1"/>
</dbReference>
<dbReference type="RefSeq" id="XP_054232343.1">
    <molecule id="Q9NUW8-2"/>
    <property type="nucleotide sequence ID" value="XM_054376368.1"/>
</dbReference>
<dbReference type="PDB" id="1JY1">
    <property type="method" value="X-ray"/>
    <property type="resolution" value="1.69 A"/>
    <property type="chains" value="A=149-608"/>
</dbReference>
<dbReference type="PDB" id="1MU7">
    <property type="method" value="X-ray"/>
    <property type="resolution" value="2.00 A"/>
    <property type="chains" value="A/B=149-608"/>
</dbReference>
<dbReference type="PDB" id="1MU9">
    <property type="method" value="X-ray"/>
    <property type="resolution" value="2.05 A"/>
    <property type="chains" value="A/B=149-608"/>
</dbReference>
<dbReference type="PDB" id="1NOP">
    <property type="method" value="X-ray"/>
    <property type="resolution" value="2.30 A"/>
    <property type="chains" value="A/B=149-608"/>
</dbReference>
<dbReference type="PDB" id="1QZQ">
    <property type="method" value="X-ray"/>
    <property type="resolution" value="2.40 A"/>
    <property type="chains" value="A/B=149-608"/>
</dbReference>
<dbReference type="PDB" id="1RFF">
    <property type="method" value="X-ray"/>
    <property type="resolution" value="1.70 A"/>
    <property type="chains" value="A/B=149-608"/>
</dbReference>
<dbReference type="PDB" id="1RFI">
    <property type="method" value="X-ray"/>
    <property type="resolution" value="2.20 A"/>
    <property type="chains" value="A/B=149-608"/>
</dbReference>
<dbReference type="PDB" id="1RG1">
    <property type="method" value="X-ray"/>
    <property type="resolution" value="2.10 A"/>
    <property type="chains" value="A/B=149-608"/>
</dbReference>
<dbReference type="PDB" id="1RG2">
    <property type="method" value="X-ray"/>
    <property type="resolution" value="2.10 A"/>
    <property type="chains" value="A/B=149-608"/>
</dbReference>
<dbReference type="PDB" id="1RGT">
    <property type="method" value="X-ray"/>
    <property type="resolution" value="2.00 A"/>
    <property type="chains" value="A/B=149-608"/>
</dbReference>
<dbReference type="PDB" id="1RGU">
    <property type="method" value="X-ray"/>
    <property type="resolution" value="2.22 A"/>
    <property type="chains" value="A/B=149-608"/>
</dbReference>
<dbReference type="PDB" id="1RH0">
    <property type="method" value="X-ray"/>
    <property type="resolution" value="2.30 A"/>
    <property type="chains" value="A/B=149-608"/>
</dbReference>
<dbReference type="PDB" id="5NW9">
    <property type="method" value="X-ray"/>
    <property type="resolution" value="2.04 A"/>
    <property type="chains" value="A/B=149-608"/>
</dbReference>
<dbReference type="PDB" id="5NWA">
    <property type="method" value="X-ray"/>
    <property type="resolution" value="3.20 A"/>
    <property type="chains" value="A/B=149-608"/>
</dbReference>
<dbReference type="PDB" id="6DHU">
    <property type="method" value="X-ray"/>
    <property type="resolution" value="1.63 A"/>
    <property type="chains" value="A/B=148-608"/>
</dbReference>
<dbReference type="PDB" id="6DIE">
    <property type="method" value="X-ray"/>
    <property type="resolution" value="1.78 A"/>
    <property type="chains" value="A/B=148-608"/>
</dbReference>
<dbReference type="PDB" id="6DIH">
    <property type="method" value="X-ray"/>
    <property type="resolution" value="1.78 A"/>
    <property type="chains" value="A/B=148-608"/>
</dbReference>
<dbReference type="PDB" id="6DIM">
    <property type="method" value="X-ray"/>
    <property type="resolution" value="1.81 A"/>
    <property type="chains" value="A/B=148-608"/>
</dbReference>
<dbReference type="PDB" id="6DJD">
    <property type="method" value="X-ray"/>
    <property type="resolution" value="1.78 A"/>
    <property type="chains" value="A/B=148-608"/>
</dbReference>
<dbReference type="PDB" id="6DJE">
    <property type="method" value="X-ray"/>
    <property type="resolution" value="1.71 A"/>
    <property type="chains" value="A/B=148-608"/>
</dbReference>
<dbReference type="PDB" id="6DJF">
    <property type="method" value="X-ray"/>
    <property type="resolution" value="1.67 A"/>
    <property type="chains" value="A/B=148-608"/>
</dbReference>
<dbReference type="PDB" id="6DJG">
    <property type="method" value="X-ray"/>
    <property type="resolution" value="1.88 A"/>
    <property type="chains" value="A/B=148-608"/>
</dbReference>
<dbReference type="PDB" id="6DJH">
    <property type="method" value="X-ray"/>
    <property type="resolution" value="1.92 A"/>
    <property type="chains" value="A/B=148-608"/>
</dbReference>
<dbReference type="PDB" id="6DJI">
    <property type="method" value="X-ray"/>
    <property type="resolution" value="1.75 A"/>
    <property type="chains" value="A/B=148-608"/>
</dbReference>
<dbReference type="PDB" id="6DJJ">
    <property type="method" value="X-ray"/>
    <property type="resolution" value="1.74 A"/>
    <property type="chains" value="A/B=148-608"/>
</dbReference>
<dbReference type="PDB" id="6MJ5">
    <property type="method" value="X-ray"/>
    <property type="resolution" value="1.85 A"/>
    <property type="chains" value="A/B=149-608"/>
</dbReference>
<dbReference type="PDB" id="6MYZ">
    <property type="method" value="X-ray"/>
    <property type="resolution" value="1.66 A"/>
    <property type="chains" value="A/B=148-608"/>
</dbReference>
<dbReference type="PDB" id="6MZ0">
    <property type="method" value="X-ray"/>
    <property type="resolution" value="1.97 A"/>
    <property type="chains" value="A/B=148-608"/>
</dbReference>
<dbReference type="PDB" id="6N0D">
    <property type="method" value="X-ray"/>
    <property type="resolution" value="1.45 A"/>
    <property type="chains" value="A/B=148-608"/>
</dbReference>
<dbReference type="PDB" id="6N0N">
    <property type="method" value="X-ray"/>
    <property type="resolution" value="1.48 A"/>
    <property type="chains" value="A/B=148-608"/>
</dbReference>
<dbReference type="PDB" id="6N0O">
    <property type="method" value="X-ray"/>
    <property type="resolution" value="1.94 A"/>
    <property type="chains" value="A/B=148-608"/>
</dbReference>
<dbReference type="PDB" id="6N0R">
    <property type="method" value="X-ray"/>
    <property type="resolution" value="1.54 A"/>
    <property type="chains" value="A/B=148-608"/>
</dbReference>
<dbReference type="PDB" id="6N17">
    <property type="method" value="X-ray"/>
    <property type="resolution" value="1.64 A"/>
    <property type="chains" value="A/B=148-608"/>
</dbReference>
<dbReference type="PDB" id="6N19">
    <property type="method" value="X-ray"/>
    <property type="resolution" value="1.50 A"/>
    <property type="chains" value="A/B=148-608"/>
</dbReference>
<dbReference type="PDB" id="6W4R">
    <property type="method" value="X-ray"/>
    <property type="resolution" value="1.82 A"/>
    <property type="chains" value="A/B=148-608"/>
</dbReference>
<dbReference type="PDB" id="6W7J">
    <property type="method" value="X-ray"/>
    <property type="resolution" value="1.49 A"/>
    <property type="chains" value="A/B=148-608"/>
</dbReference>
<dbReference type="PDB" id="6W7K">
    <property type="method" value="X-ray"/>
    <property type="resolution" value="1.70 A"/>
    <property type="chains" value="A/B=148-608"/>
</dbReference>
<dbReference type="PDB" id="6W7L">
    <property type="method" value="X-ray"/>
    <property type="resolution" value="1.86 A"/>
    <property type="chains" value="A/B=148-608"/>
</dbReference>
<dbReference type="PDB" id="7UFY">
    <property type="method" value="X-ray"/>
    <property type="resolution" value="1.58 A"/>
    <property type="chains" value="A/B=148-608"/>
</dbReference>
<dbReference type="PDB" id="7UFZ">
    <property type="method" value="X-ray"/>
    <property type="resolution" value="1.56 A"/>
    <property type="chains" value="A/B=148-608"/>
</dbReference>
<dbReference type="PDB" id="8CVQ">
    <property type="method" value="X-ray"/>
    <property type="resolution" value="1.65 A"/>
    <property type="chains" value="A/B=148-608"/>
</dbReference>
<dbReference type="PDB" id="8CW2">
    <property type="method" value="X-ray"/>
    <property type="resolution" value="1.81 A"/>
    <property type="chains" value="A/B=148-608"/>
</dbReference>
<dbReference type="PDB" id="8UV1">
    <property type="method" value="X-ray"/>
    <property type="resolution" value="1.83 A"/>
    <property type="chains" value="A/B=148-608"/>
</dbReference>
<dbReference type="PDB" id="8UZV">
    <property type="method" value="X-ray"/>
    <property type="resolution" value="1.85 A"/>
    <property type="chains" value="A/B=148-608"/>
</dbReference>
<dbReference type="PDB" id="8UZZ">
    <property type="method" value="X-ray"/>
    <property type="resolution" value="1.93 A"/>
    <property type="chains" value="A/B=148-608"/>
</dbReference>
<dbReference type="PDB" id="8V0B">
    <property type="method" value="X-ray"/>
    <property type="resolution" value="1.65 A"/>
    <property type="chains" value="A/B=148-608"/>
</dbReference>
<dbReference type="PDB" id="8V0C">
    <property type="method" value="X-ray"/>
    <property type="resolution" value="1.62 A"/>
    <property type="chains" value="A/B=148-608"/>
</dbReference>
<dbReference type="PDB" id="9B3B">
    <property type="method" value="X-ray"/>
    <property type="resolution" value="1.62 A"/>
    <property type="chains" value="A/B=148-608"/>
</dbReference>
<dbReference type="PDBsum" id="1JY1"/>
<dbReference type="PDBsum" id="1MU7"/>
<dbReference type="PDBsum" id="1MU9"/>
<dbReference type="PDBsum" id="1NOP"/>
<dbReference type="PDBsum" id="1QZQ"/>
<dbReference type="PDBsum" id="1RFF"/>
<dbReference type="PDBsum" id="1RFI"/>
<dbReference type="PDBsum" id="1RG1"/>
<dbReference type="PDBsum" id="1RG2"/>
<dbReference type="PDBsum" id="1RGT"/>
<dbReference type="PDBsum" id="1RGU"/>
<dbReference type="PDBsum" id="1RH0"/>
<dbReference type="PDBsum" id="5NW9"/>
<dbReference type="PDBsum" id="5NWA"/>
<dbReference type="PDBsum" id="6DHU"/>
<dbReference type="PDBsum" id="6DIE"/>
<dbReference type="PDBsum" id="6DIH"/>
<dbReference type="PDBsum" id="6DIM"/>
<dbReference type="PDBsum" id="6DJD"/>
<dbReference type="PDBsum" id="6DJE"/>
<dbReference type="PDBsum" id="6DJF"/>
<dbReference type="PDBsum" id="6DJG"/>
<dbReference type="PDBsum" id="6DJH"/>
<dbReference type="PDBsum" id="6DJI"/>
<dbReference type="PDBsum" id="6DJJ"/>
<dbReference type="PDBsum" id="6MJ5"/>
<dbReference type="PDBsum" id="6MYZ"/>
<dbReference type="PDBsum" id="6MZ0"/>
<dbReference type="PDBsum" id="6N0D"/>
<dbReference type="PDBsum" id="6N0N"/>
<dbReference type="PDBsum" id="6N0O"/>
<dbReference type="PDBsum" id="6N0R"/>
<dbReference type="PDBsum" id="6N17"/>
<dbReference type="PDBsum" id="6N19"/>
<dbReference type="PDBsum" id="6W4R"/>
<dbReference type="PDBsum" id="6W7J"/>
<dbReference type="PDBsum" id="6W7K"/>
<dbReference type="PDBsum" id="6W7L"/>
<dbReference type="PDBsum" id="7UFY"/>
<dbReference type="PDBsum" id="7UFZ"/>
<dbReference type="PDBsum" id="8CVQ"/>
<dbReference type="PDBsum" id="8CW2"/>
<dbReference type="PDBsum" id="8UV1"/>
<dbReference type="PDBsum" id="8UZV"/>
<dbReference type="PDBsum" id="8UZZ"/>
<dbReference type="PDBsum" id="8V0B"/>
<dbReference type="PDBsum" id="8V0C"/>
<dbReference type="PDBsum" id="9B3B"/>
<dbReference type="SASBDB" id="Q9NUW8"/>
<dbReference type="SMR" id="Q9NUW8"/>
<dbReference type="BioGRID" id="120890">
    <property type="interactions" value="33"/>
</dbReference>
<dbReference type="ComplexPortal" id="CPX-793">
    <property type="entry name" value="XRCC1 DNA repair complex"/>
</dbReference>
<dbReference type="CORUM" id="Q9NUW8"/>
<dbReference type="FunCoup" id="Q9NUW8">
    <property type="interactions" value="3987"/>
</dbReference>
<dbReference type="IntAct" id="Q9NUW8">
    <property type="interactions" value="31"/>
</dbReference>
<dbReference type="MINT" id="Q9NUW8"/>
<dbReference type="STRING" id="9606.ENSP00000337353"/>
<dbReference type="BindingDB" id="Q9NUW8"/>
<dbReference type="ChEMBL" id="CHEMBL1075138"/>
<dbReference type="GlyGen" id="Q9NUW8">
    <property type="glycosylation" value="9 sites, 1 O-linked glycan (8 sites)"/>
</dbReference>
<dbReference type="iPTMnet" id="Q9NUW8"/>
<dbReference type="PhosphoSitePlus" id="Q9NUW8"/>
<dbReference type="BioMuta" id="TDP1"/>
<dbReference type="DMDM" id="37999797"/>
<dbReference type="jPOST" id="Q9NUW8"/>
<dbReference type="MassIVE" id="Q9NUW8"/>
<dbReference type="PaxDb" id="9606-ENSP00000337353"/>
<dbReference type="PeptideAtlas" id="Q9NUW8"/>
<dbReference type="ProteomicsDB" id="69739"/>
<dbReference type="ProteomicsDB" id="82725">
    <molecule id="Q9NUW8-1"/>
</dbReference>
<dbReference type="Pumba" id="Q9NUW8"/>
<dbReference type="Antibodypedia" id="26468">
    <property type="antibodies" value="356 antibodies from 31 providers"/>
</dbReference>
<dbReference type="DNASU" id="55775"/>
<dbReference type="Ensembl" id="ENST00000335725.9">
    <molecule id="Q9NUW8-1"/>
    <property type="protein sequence ID" value="ENSP00000337353.4"/>
    <property type="gene ID" value="ENSG00000042088.14"/>
</dbReference>
<dbReference type="Ensembl" id="ENST00000393454.6">
    <molecule id="Q9NUW8-1"/>
    <property type="protein sequence ID" value="ENSP00000377099.2"/>
    <property type="gene ID" value="ENSG00000042088.14"/>
</dbReference>
<dbReference type="GeneID" id="55775"/>
<dbReference type="KEGG" id="hsa:55775"/>
<dbReference type="MANE-Select" id="ENST00000335725.9">
    <property type="protein sequence ID" value="ENSP00000337353.4"/>
    <property type="RefSeq nucleotide sequence ID" value="NM_018319.4"/>
    <property type="RefSeq protein sequence ID" value="NP_060789.2"/>
</dbReference>
<dbReference type="UCSC" id="uc001xxy.4">
    <molecule id="Q9NUW8-1"/>
    <property type="organism name" value="human"/>
</dbReference>
<dbReference type="AGR" id="HGNC:18884"/>
<dbReference type="CTD" id="55775"/>
<dbReference type="DisGeNET" id="55775"/>
<dbReference type="GeneCards" id="TDP1"/>
<dbReference type="GeneReviews" id="TDP1"/>
<dbReference type="HGNC" id="HGNC:18884">
    <property type="gene designation" value="TDP1"/>
</dbReference>
<dbReference type="HPA" id="ENSG00000042088">
    <property type="expression patterns" value="Low tissue specificity"/>
</dbReference>
<dbReference type="MalaCards" id="TDP1"/>
<dbReference type="MIM" id="607198">
    <property type="type" value="gene"/>
</dbReference>
<dbReference type="MIM" id="607250">
    <property type="type" value="phenotype"/>
</dbReference>
<dbReference type="neXtProt" id="NX_Q9NUW8"/>
<dbReference type="OpenTargets" id="ENSG00000042088"/>
<dbReference type="Orphanet" id="94124">
    <property type="disease" value="Spinocerebellar ataxia with axonal neuropathy type 1"/>
</dbReference>
<dbReference type="PharmGKB" id="PA421"/>
<dbReference type="VEuPathDB" id="HostDB:ENSG00000042088"/>
<dbReference type="eggNOG" id="KOG2031">
    <property type="taxonomic scope" value="Eukaryota"/>
</dbReference>
<dbReference type="GeneTree" id="ENSGT00390000002211"/>
<dbReference type="HOGENOM" id="CLU_010413_4_0_1"/>
<dbReference type="InParanoid" id="Q9NUW8"/>
<dbReference type="OMA" id="PLIKECW"/>
<dbReference type="OrthoDB" id="47785at2759"/>
<dbReference type="PAN-GO" id="Q9NUW8">
    <property type="GO annotations" value="6 GO annotations based on evolutionary models"/>
</dbReference>
<dbReference type="PhylomeDB" id="Q9NUW8"/>
<dbReference type="TreeFam" id="TF105989"/>
<dbReference type="BRENDA" id="3.1.4.1">
    <property type="organism ID" value="2681"/>
</dbReference>
<dbReference type="PathwayCommons" id="Q9NUW8"/>
<dbReference type="Reactome" id="R-HSA-5693571">
    <property type="pathway name" value="Nonhomologous End-Joining (NHEJ)"/>
</dbReference>
<dbReference type="SABIO-RK" id="Q9NUW8"/>
<dbReference type="SignaLink" id="Q9NUW8"/>
<dbReference type="SIGNOR" id="Q9NUW8"/>
<dbReference type="BioGRID-ORCS" id="55775">
    <property type="hits" value="20 hits in 1161 CRISPR screens"/>
</dbReference>
<dbReference type="ChiTaRS" id="TDP1">
    <property type="organism name" value="human"/>
</dbReference>
<dbReference type="EvolutionaryTrace" id="Q9NUW8"/>
<dbReference type="GeneWiki" id="TDP1"/>
<dbReference type="GenomeRNAi" id="55775"/>
<dbReference type="Pharos" id="Q9NUW8">
    <property type="development level" value="Tchem"/>
</dbReference>
<dbReference type="PRO" id="PR:Q9NUW8"/>
<dbReference type="Proteomes" id="UP000005640">
    <property type="component" value="Chromosome 14"/>
</dbReference>
<dbReference type="RNAct" id="Q9NUW8">
    <property type="molecule type" value="protein"/>
</dbReference>
<dbReference type="Bgee" id="ENSG00000042088">
    <property type="expression patterns" value="Expressed in oocyte and 143 other cell types or tissues"/>
</dbReference>
<dbReference type="ExpressionAtlas" id="Q9NUW8">
    <property type="expression patterns" value="baseline and differential"/>
</dbReference>
<dbReference type="GO" id="GO:0005737">
    <property type="term" value="C:cytoplasm"/>
    <property type="evidence" value="ECO:0000314"/>
    <property type="project" value="UniProtKB"/>
</dbReference>
<dbReference type="GO" id="GO:0043231">
    <property type="term" value="C:intracellular membrane-bounded organelle"/>
    <property type="evidence" value="ECO:0000314"/>
    <property type="project" value="HPA"/>
</dbReference>
<dbReference type="GO" id="GO:0005654">
    <property type="term" value="C:nucleoplasm"/>
    <property type="evidence" value="ECO:0000314"/>
    <property type="project" value="HPA"/>
</dbReference>
<dbReference type="GO" id="GO:0005634">
    <property type="term" value="C:nucleus"/>
    <property type="evidence" value="ECO:0000318"/>
    <property type="project" value="GO_Central"/>
</dbReference>
<dbReference type="GO" id="GO:0005886">
    <property type="term" value="C:plasma membrane"/>
    <property type="evidence" value="ECO:0000314"/>
    <property type="project" value="HPA"/>
</dbReference>
<dbReference type="GO" id="GO:0017005">
    <property type="term" value="F:3'-tyrosyl-DNA phosphodiesterase activity"/>
    <property type="evidence" value="ECO:0000314"/>
    <property type="project" value="UniProtKB"/>
</dbReference>
<dbReference type="GO" id="GO:0003690">
    <property type="term" value="F:double-stranded DNA binding"/>
    <property type="evidence" value="ECO:0000314"/>
    <property type="project" value="UniProtKB"/>
</dbReference>
<dbReference type="GO" id="GO:0004527">
    <property type="term" value="F:exonuclease activity"/>
    <property type="evidence" value="ECO:0007669"/>
    <property type="project" value="UniProtKB-KW"/>
</dbReference>
<dbReference type="GO" id="GO:0003697">
    <property type="term" value="F:single-stranded DNA binding"/>
    <property type="evidence" value="ECO:0000314"/>
    <property type="project" value="UniProtKB"/>
</dbReference>
<dbReference type="GO" id="GO:0006281">
    <property type="term" value="P:DNA repair"/>
    <property type="evidence" value="ECO:0000314"/>
    <property type="project" value="UniProtKB"/>
</dbReference>
<dbReference type="GO" id="GO:0006302">
    <property type="term" value="P:double-strand break repair"/>
    <property type="evidence" value="ECO:0000314"/>
    <property type="project" value="UniProtKB"/>
</dbReference>
<dbReference type="GO" id="GO:0000012">
    <property type="term" value="P:single strand break repair"/>
    <property type="evidence" value="ECO:0000314"/>
    <property type="project" value="UniProtKB"/>
</dbReference>
<dbReference type="CDD" id="cd09193">
    <property type="entry name" value="PLDc_mTdp1_1"/>
    <property type="match status" value="1"/>
</dbReference>
<dbReference type="CDD" id="cd09195">
    <property type="entry name" value="PLDc_mTdp1_2"/>
    <property type="match status" value="1"/>
</dbReference>
<dbReference type="FunFam" id="3.30.870.10:FF:000012">
    <property type="entry name" value="Tyrosyl-DNA phosphodiesterase 1"/>
    <property type="match status" value="1"/>
</dbReference>
<dbReference type="FunFam" id="3.30.870.10:FF:000020">
    <property type="entry name" value="Tyrosyl-DNA phosphodiesterase 1"/>
    <property type="match status" value="1"/>
</dbReference>
<dbReference type="Gene3D" id="3.30.870.10">
    <property type="entry name" value="Endonuclease Chain A"/>
    <property type="match status" value="2"/>
</dbReference>
<dbReference type="InterPro" id="IPR010347">
    <property type="entry name" value="Tdp1"/>
</dbReference>
<dbReference type="PANTHER" id="PTHR12415">
    <property type="entry name" value="TYROSYL-DNA PHOSPHODIESTERASE 1"/>
    <property type="match status" value="1"/>
</dbReference>
<dbReference type="PANTHER" id="PTHR12415:SF0">
    <property type="entry name" value="TYROSYL-DNA PHOSPHODIESTERASE 1"/>
    <property type="match status" value="1"/>
</dbReference>
<dbReference type="Pfam" id="PF06087">
    <property type="entry name" value="Tyr-DNA_phospho"/>
    <property type="match status" value="1"/>
</dbReference>
<dbReference type="SUPFAM" id="SSF56024">
    <property type="entry name" value="Phospholipase D/nuclease"/>
    <property type="match status" value="2"/>
</dbReference>
<keyword id="KW-0002">3D-structure</keyword>
<keyword id="KW-0025">Alternative splicing</keyword>
<keyword id="KW-0963">Cytoplasm</keyword>
<keyword id="KW-0225">Disease variant</keyword>
<keyword id="KW-0227">DNA damage</keyword>
<keyword id="KW-0234">DNA repair</keyword>
<keyword id="KW-0269">Exonuclease</keyword>
<keyword id="KW-0378">Hydrolase</keyword>
<keyword id="KW-0523">Neurodegeneration</keyword>
<keyword id="KW-0540">Nuclease</keyword>
<keyword id="KW-0539">Nucleus</keyword>
<keyword id="KW-0597">Phosphoprotein</keyword>
<keyword id="KW-1267">Proteomics identification</keyword>
<keyword id="KW-1185">Reference proteome</keyword>
<keyword id="KW-0677">Repeat</keyword>
<organism>
    <name type="scientific">Homo sapiens</name>
    <name type="common">Human</name>
    <dbReference type="NCBI Taxonomy" id="9606"/>
    <lineage>
        <taxon>Eukaryota</taxon>
        <taxon>Metazoa</taxon>
        <taxon>Chordata</taxon>
        <taxon>Craniata</taxon>
        <taxon>Vertebrata</taxon>
        <taxon>Euteleostomi</taxon>
        <taxon>Mammalia</taxon>
        <taxon>Eutheria</taxon>
        <taxon>Euarchontoglires</taxon>
        <taxon>Primates</taxon>
        <taxon>Haplorrhini</taxon>
        <taxon>Catarrhini</taxon>
        <taxon>Hominidae</taxon>
        <taxon>Homo</taxon>
    </lineage>
</organism>
<sequence>MSQEGDYGRWTISSSDESEEEKPKPDKPSTSSLLCARQGAANEPRYTCSEAQKAAHKRKISPVKFSNTDSVLPPKRQKSGSQEDLGWCLSSSDDELQPEMPQKQAEKVVIKKEKDISAPNDGTAQRTENHGAPACHRLKEEEDEYETSGEGQDIWDMLDKGNPFQFYLTRVSGVKPKYNSGALHIKDILSPLFGTLVSSAQFNYCFDVDWLVKQYPPEFRKKPILLVHGDKREAKAHLHAQAKPYENISLCQAKLDIAFGTHHTKMMLLLYEEGLRVVIHTSNLIHADWHQKTQGIWLSPLYPRIADGTHKSGESPTHFKADLISYLMAYNAPSLKEWIDVIHKHDLSETNVYLIGSTPGRFQGSQKDNWGHFRLKKLLKDHASSMPNAESWPVVGQFSSVGSLGADESKWLCSEFKESMLTLGKESKTPGKSSVPLYLIYPSVENVRTSLEGYPAGGSLPYSIQTAEKQNWLHSYFHKWSAETSGRSNAMPHIKTYMRPSPDFSKIAWFLVTSANLSKAAWGALEKNGTQLMIRSYELGVLFLPSAFGLDSFKVKQKFFAGSQEPMATFPVPYDLPPELYGSKDRPWIWNIPYVKAPDTHGNMWVPS</sequence>
<proteinExistence type="evidence at protein level"/>
<feature type="chain" id="PRO_0000212486" description="Tyrosyl-DNA phosphodiesterase 1">
    <location>
        <begin position="1"/>
        <end position="608"/>
    </location>
</feature>
<feature type="region of interest" description="Disordered" evidence="1">
    <location>
        <begin position="1"/>
        <end position="101"/>
    </location>
</feature>
<feature type="region of interest" description="Interaction with DNA" evidence="6">
    <location>
        <begin position="400"/>
        <end position="403"/>
    </location>
</feature>
<feature type="active site" description="Nucleophile" evidence="6 7">
    <location>
        <position position="263"/>
    </location>
</feature>
<feature type="active site" description="Proton donor/acceptor" evidence="6 7">
    <location>
        <position position="493"/>
    </location>
</feature>
<feature type="binding site" evidence="6">
    <location>
        <position position="265"/>
    </location>
    <ligand>
        <name>substrate</name>
    </ligand>
</feature>
<feature type="binding site" evidence="6">
    <location>
        <position position="495"/>
    </location>
    <ligand>
        <name>substrate</name>
    </ligand>
</feature>
<feature type="site" description="Interaction with DNA" evidence="6">
    <location>
        <position position="518"/>
    </location>
</feature>
<feature type="modified residue" description="Phosphoserine" evidence="17 19">
    <location>
        <position position="61"/>
    </location>
</feature>
<feature type="modified residue" description="Phosphothreonine" evidence="18">
    <location>
        <position position="147"/>
    </location>
</feature>
<feature type="modified residue" description="Phosphoserine" evidence="18">
    <location>
        <position position="148"/>
    </location>
</feature>
<feature type="splice variant" id="VSP_055765" description="In isoform 2." evidence="15">
    <original>MSQEGDYGRWTISSSDESEEEKPKP</original>
    <variation>MVISERLRLTSMPRPSLTRTSLSAR</variation>
    <location>
        <begin position="1"/>
        <end position="25"/>
    </location>
</feature>
<feature type="splice variant" id="VSP_055766" description="In isoform 2." evidence="15">
    <location>
        <begin position="26"/>
        <end position="264"/>
    </location>
</feature>
<feature type="sequence variant" id="VAR_025817" description="In dbSNP:rs35114462." evidence="14">
    <original>E</original>
    <variation>D</variation>
    <location>
        <position position="95"/>
    </location>
</feature>
<feature type="sequence variant" id="VAR_025818" description="In dbSNP:rs35455108." evidence="14">
    <original>P</original>
    <variation>L</variation>
    <location>
        <position position="101"/>
    </location>
</feature>
<feature type="sequence variant" id="VAR_025819" description="In dbSNP:rs28365054." evidence="14">
    <original>A</original>
    <variation>T</variation>
    <location>
        <position position="134"/>
    </location>
</feature>
<feature type="sequence variant" id="VAR_025820" description="In dbSNP:rs35271143." evidence="14">
    <original>D</original>
    <variation>G</variation>
    <location>
        <position position="187"/>
    </location>
</feature>
<feature type="sequence variant" id="VAR_025821" description="In dbSNP:rs34452707." evidence="14">
    <original>R</original>
    <variation>Q</variation>
    <location>
        <position position="304"/>
    </location>
</feature>
<feature type="sequence variant" id="VAR_017144" description="In SCAN1; reduces enzyme activity and leads to the accumulation of covalent complexes between TDP1 and DNA; dbSNP:rs119467003." evidence="5 8 10 11 12">
    <original>H</original>
    <variation>R</variation>
    <location>
        <position position="493"/>
    </location>
</feature>
<feature type="sequence variant" id="VAR_017145" description="In autosomal recessive or sporadic spinocerebellar ataxia affected Japanese individuals; dbSNP:rs767298655." evidence="5">
    <original>P</original>
    <variation>L</variation>
    <location>
        <position position="566"/>
    </location>
</feature>
<feature type="sequence variant" id="VAR_025822" description="In dbSNP:rs35973343." evidence="14">
    <original>T</original>
    <variation>A</variation>
    <location>
        <position position="569"/>
    </location>
</feature>
<feature type="mutagenesis site" description="Loss of activity." evidence="2 7">
    <original>H</original>
    <variation>A</variation>
    <location>
        <position position="263"/>
    </location>
</feature>
<feature type="mutagenesis site" description="Abolishes hydrolysis of the covalent intermediate between the active site nucleophile and DNA." evidence="2 7">
    <original>K</original>
    <variation>A</variation>
    <location>
        <position position="265"/>
    </location>
</feature>
<feature type="mutagenesis site" description="Reduces the activity to nearly undetectable levels." evidence="2 7">
    <original>K</original>
    <variation>S</variation>
    <location>
        <position position="265"/>
    </location>
</feature>
<feature type="mutagenesis site" description="No effect." evidence="7">
    <original>N</original>
    <variation>A</variation>
    <location>
        <position position="283"/>
    </location>
</feature>
<feature type="mutagenesis site" description="Slightly reduced hydrolysis of the covalent intermediate between the active site nucleophile and DNA." evidence="7">
    <original>Q</original>
    <variation>A</variation>
    <location>
        <position position="294"/>
    </location>
</feature>
<feature type="mutagenesis site" description="3000-fold reduction in activity; abolishes hydrolysis of the covalent intermediate between the active site nucleophile and DNA." evidence="2 7">
    <original>H</original>
    <variation>A</variation>
    <location>
        <position position="493"/>
    </location>
</feature>
<feature type="mutagenesis site" description="15000-fold reduction in activity." evidence="2 7">
    <original>H</original>
    <variation>N</variation>
    <location>
        <position position="493"/>
    </location>
</feature>
<feature type="mutagenesis site" description="Abolishes hydrolysis of the covalent intermediate between the active site nucleophile and DNA." evidence="2 7">
    <original>K</original>
    <variation>A</variation>
    <location>
        <position position="495"/>
    </location>
</feature>
<feature type="mutagenesis site" description="125-fold reduction in activity." evidence="2 7">
    <original>K</original>
    <variation>S</variation>
    <location>
        <position position="495"/>
    </location>
</feature>
<feature type="mutagenesis site" description="Reduced hydrolysis of the covalent intermediate between the active site nucleophile and DNA." evidence="7">
    <original>N</original>
    <variation>A</variation>
    <location>
        <position position="516"/>
    </location>
</feature>
<feature type="mutagenesis site" description="Abolishes hydrolysis of the covalent intermediate between the active site nucleophile and DNA." evidence="7">
    <original>E</original>
    <variation>A</variation>
    <location>
        <position position="538"/>
    </location>
</feature>
<feature type="sequence conflict" description="In Ref. 2; BAA91997." evidence="16" ref="2">
    <original>A</original>
    <variation>P</variation>
    <location>
        <position position="389"/>
    </location>
</feature>
<feature type="sequence conflict" description="In Ref. 6; AAF65624." evidence="16" ref="6">
    <original>L</original>
    <variation>R</variation>
    <location>
        <position position="511"/>
    </location>
</feature>
<feature type="turn" evidence="20">
    <location>
        <begin position="149"/>
        <end position="151"/>
    </location>
</feature>
<feature type="helix" evidence="20">
    <location>
        <begin position="154"/>
        <end position="156"/>
    </location>
</feature>
<feature type="strand" evidence="24">
    <location>
        <begin position="166"/>
        <end position="169"/>
    </location>
</feature>
<feature type="helix" evidence="24">
    <location>
        <begin position="176"/>
        <end position="178"/>
    </location>
</feature>
<feature type="turn" evidence="24">
    <location>
        <begin position="179"/>
        <end position="181"/>
    </location>
</feature>
<feature type="helix" evidence="24">
    <location>
        <begin position="185"/>
        <end position="188"/>
    </location>
</feature>
<feature type="helix" evidence="24">
    <location>
        <begin position="191"/>
        <end position="193"/>
    </location>
</feature>
<feature type="strand" evidence="24">
    <location>
        <begin position="196"/>
        <end position="202"/>
    </location>
</feature>
<feature type="strand" evidence="21">
    <location>
        <begin position="204"/>
        <end position="206"/>
    </location>
</feature>
<feature type="helix" evidence="24">
    <location>
        <begin position="208"/>
        <end position="214"/>
    </location>
</feature>
<feature type="helix" evidence="24">
    <location>
        <begin position="217"/>
        <end position="219"/>
    </location>
</feature>
<feature type="strand" evidence="24">
    <location>
        <begin position="224"/>
        <end position="228"/>
    </location>
</feature>
<feature type="helix" evidence="24">
    <location>
        <begin position="232"/>
        <end position="242"/>
    </location>
</feature>
<feature type="strand" evidence="24">
    <location>
        <begin position="248"/>
        <end position="252"/>
    </location>
</feature>
<feature type="strand" evidence="24">
    <location>
        <begin position="266"/>
        <end position="273"/>
    </location>
</feature>
<feature type="strand" evidence="24">
    <location>
        <begin position="275"/>
        <end position="280"/>
    </location>
</feature>
<feature type="helix" evidence="24">
    <location>
        <begin position="286"/>
        <end position="289"/>
    </location>
</feature>
<feature type="strand" evidence="24">
    <location>
        <begin position="291"/>
        <end position="293"/>
    </location>
</feature>
<feature type="strand" evidence="24">
    <location>
        <begin position="295"/>
        <end position="298"/>
    </location>
</feature>
<feature type="helix" evidence="24">
    <location>
        <begin position="319"/>
        <end position="328"/>
    </location>
</feature>
<feature type="helix" evidence="24">
    <location>
        <begin position="333"/>
        <end position="343"/>
    </location>
</feature>
<feature type="strand" evidence="24">
    <location>
        <begin position="352"/>
        <end position="357"/>
    </location>
</feature>
<feature type="strand" evidence="24">
    <location>
        <begin position="359"/>
        <end position="363"/>
    </location>
</feature>
<feature type="helix" evidence="24">
    <location>
        <begin position="364"/>
        <end position="369"/>
    </location>
</feature>
<feature type="helix" evidence="24">
    <location>
        <begin position="371"/>
        <end position="382"/>
    </location>
</feature>
<feature type="helix" evidence="24">
    <location>
        <begin position="389"/>
        <end position="391"/>
    </location>
</feature>
<feature type="strand" evidence="24">
    <location>
        <begin position="394"/>
        <end position="397"/>
    </location>
</feature>
<feature type="turn" evidence="24">
    <location>
        <begin position="408"/>
        <end position="415"/>
    </location>
</feature>
<feature type="helix" evidence="24">
    <location>
        <begin position="416"/>
        <end position="421"/>
    </location>
</feature>
<feature type="strand" evidence="22">
    <location>
        <begin position="424"/>
        <end position="426"/>
    </location>
</feature>
<feature type="strand" evidence="24">
    <location>
        <begin position="437"/>
        <end position="440"/>
    </location>
</feature>
<feature type="helix" evidence="24">
    <location>
        <begin position="444"/>
        <end position="448"/>
    </location>
</feature>
<feature type="strand" evidence="24">
    <location>
        <begin position="450"/>
        <end position="452"/>
    </location>
</feature>
<feature type="helix" evidence="24">
    <location>
        <begin position="454"/>
        <end position="459"/>
    </location>
</feature>
<feature type="helix" evidence="24">
    <location>
        <begin position="464"/>
        <end position="467"/>
    </location>
</feature>
<feature type="helix" evidence="24">
    <location>
        <begin position="471"/>
        <end position="476"/>
    </location>
</feature>
<feature type="strand" evidence="23">
    <location>
        <begin position="477"/>
        <end position="479"/>
    </location>
</feature>
<feature type="helix" evidence="24">
    <location>
        <begin position="483"/>
        <end position="485"/>
    </location>
</feature>
<feature type="strand" evidence="25">
    <location>
        <begin position="490"/>
        <end position="492"/>
    </location>
</feature>
<feature type="strand" evidence="24">
    <location>
        <begin position="495"/>
        <end position="500"/>
    </location>
</feature>
<feature type="strand" evidence="24">
    <location>
        <begin position="504"/>
        <end position="514"/>
    </location>
</feature>
<feature type="helix" evidence="24">
    <location>
        <begin position="519"/>
        <end position="522"/>
    </location>
</feature>
<feature type="strand" evidence="24">
    <location>
        <begin position="524"/>
        <end position="526"/>
    </location>
</feature>
<feature type="turn" evidence="24">
    <location>
        <begin position="527"/>
        <end position="530"/>
    </location>
</feature>
<feature type="strand" evidence="24">
    <location>
        <begin position="531"/>
        <end position="534"/>
    </location>
</feature>
<feature type="strand" evidence="24">
    <location>
        <begin position="536"/>
        <end position="543"/>
    </location>
</feature>
<feature type="helix" evidence="24">
    <location>
        <begin position="545"/>
        <end position="548"/>
    </location>
</feature>
<feature type="strand" evidence="24">
    <location>
        <begin position="553"/>
        <end position="555"/>
    </location>
</feature>
<feature type="strand" evidence="26">
    <location>
        <begin position="568"/>
        <end position="570"/>
    </location>
</feature>
<comment type="function">
    <text evidence="4 7 9 11 13">DNA repair enzyme that can remove a variety of covalent adducts from DNA through hydrolysis of a 3'-phosphodiester bond, giving rise to DNA with a free 3' phosphate. Catalyzes the hydrolysis of dead-end complexes between DNA and the topoisomerase I active site tyrosine residue. Hydrolyzes 3'-phosphoglycolates on protruding 3' ends on DNA double-strand breaks due to DNA damage by radiation and free radicals. Acts on blunt-ended double-strand DNA breaks and on single-stranded DNA. Has low 3'exonuclease activity and can remove a single nucleoside from the 3'end of DNA and RNA molecules with 3'hydroxyl groups. Has no exonuclease activity towards DNA or RNA with a 3'phosphate.</text>
</comment>
<comment type="biophysicochemical properties">
    <kinetics>
        <KM evidence="13">0.08 uM for 14-mer single-stranded oligo with a 3'-phosphotyrosine</KM>
        <text>kcat is 7 sec(-1) with single-stranded 5'-tyrosyl DNA as substrate.</text>
    </kinetics>
</comment>
<comment type="subunit">
    <text evidence="3">Monomer.</text>
</comment>
<comment type="interaction">
    <interactant intactId="EBI-2902553">
        <id>Q9NUW8</id>
    </interactant>
    <interactant intactId="EBI-10988864">
        <id>P46379-2</id>
        <label>BAG6</label>
    </interactant>
    <organismsDiffer>false</organismsDiffer>
    <experiments>3</experiments>
</comment>
<comment type="interaction">
    <interactant intactId="EBI-2902553">
        <id>Q9NUW8</id>
    </interactant>
    <interactant intactId="EBI-3508943">
        <id>Q9H816</id>
        <label>DCLRE1B</label>
    </interactant>
    <organismsDiffer>false</organismsDiffer>
    <experiments>3</experiments>
</comment>
<comment type="interaction">
    <interactant intactId="EBI-2902553">
        <id>Q9NUW8</id>
    </interactant>
    <interactant intactId="EBI-349938">
        <id>P52292</id>
        <label>KPNA2</label>
    </interactant>
    <organismsDiffer>false</organismsDiffer>
    <experiments>2</experiments>
</comment>
<comment type="interaction">
    <interactant intactId="EBI-2902553">
        <id>Q9NUW8</id>
    </interactant>
    <interactant intactId="EBI-1108377">
        <id>Q9BYZ2</id>
        <label>LDHAL6B</label>
    </interactant>
    <organismsDiffer>false</organismsDiffer>
    <experiments>3</experiments>
</comment>
<comment type="interaction">
    <interactant intactId="EBI-2902553">
        <id>Q9NUW8</id>
    </interactant>
    <interactant intactId="EBI-21250407">
        <id>A4FUJ8</id>
        <label>MKL1</label>
    </interactant>
    <organismsDiffer>false</organismsDiffer>
    <experiments>3</experiments>
</comment>
<comment type="interaction">
    <interactant intactId="EBI-2902553">
        <id>Q9NUW8</id>
    </interactant>
    <interactant intactId="EBI-629434">
        <id>O75925</id>
        <label>PIAS1</label>
    </interactant>
    <organismsDiffer>false</organismsDiffer>
    <experiments>3</experiments>
</comment>
<comment type="interaction">
    <interactant intactId="EBI-2902553">
        <id>Q9NUW8</id>
    </interactant>
    <interactant intactId="EBI-438710">
        <id>Q9NS23-4</id>
        <label>RASSF1</label>
    </interactant>
    <organismsDiffer>false</organismsDiffer>
    <experiments>3</experiments>
</comment>
<comment type="interaction">
    <interactant intactId="EBI-2902553">
        <id>Q9NUW8</id>
    </interactant>
    <interactant intactId="EBI-21535400">
        <id>Q6ZNA4-2</id>
        <label>RNF111</label>
    </interactant>
    <organismsDiffer>false</organismsDiffer>
    <experiments>3</experiments>
</comment>
<comment type="interaction">
    <interactant intactId="EBI-2902553">
        <id>Q9NUW8</id>
    </interactant>
    <interactant intactId="EBI-752324">
        <id>Q8N488</id>
        <label>RYBP</label>
    </interactant>
    <organismsDiffer>false</organismsDiffer>
    <experiments>3</experiments>
</comment>
<comment type="interaction">
    <interactant intactId="EBI-2902553">
        <id>Q9NUW8</id>
    </interactant>
    <interactant intactId="EBI-2510414">
        <id>Q8IUW3</id>
        <label>SPATA2L</label>
    </interactant>
    <organismsDiffer>false</organismsDiffer>
    <experiments>3</experiments>
</comment>
<comment type="interaction">
    <interactant intactId="EBI-2902553">
        <id>Q9NUW8</id>
    </interactant>
    <interactant intactId="EBI-25840535">
        <id>Q15554-4</id>
        <label>TERF2</label>
    </interactant>
    <organismsDiffer>false</organismsDiffer>
    <experiments>3</experiments>
</comment>
<comment type="interaction">
    <interactant intactId="EBI-2902553">
        <id>Q9NUW8</id>
    </interactant>
    <interactant intactId="EBI-2107455">
        <id>Q08AM6</id>
        <label>VAC14</label>
    </interactant>
    <organismsDiffer>false</organismsDiffer>
    <experiments>3</experiments>
</comment>
<comment type="interaction">
    <interactant intactId="EBI-2902553">
        <id>Q9NUW8</id>
    </interactant>
    <interactant intactId="EBI-947466">
        <id>P18887</id>
        <label>XRCC1</label>
    </interactant>
    <organismsDiffer>false</organismsDiffer>
    <experiments>3</experiments>
</comment>
<comment type="subcellular location">
    <subcellularLocation>
        <location evidence="8">Nucleus</location>
    </subcellularLocation>
    <subcellularLocation>
        <location evidence="8">Cytoplasm</location>
    </subcellularLocation>
</comment>
<comment type="alternative products">
    <event type="alternative splicing"/>
    <isoform>
        <id>Q9NUW8-1</id>
        <name>1</name>
        <sequence type="displayed"/>
    </isoform>
    <isoform>
        <id>Q9NUW8-2</id>
        <name>2</name>
        <sequence type="described" ref="VSP_055765 VSP_055766"/>
    </isoform>
</comment>
<comment type="tissue specificity">
    <text evidence="5 12">Ubiquitously expressed. Similar expression throughout the central nervous system (whole brain, amygdala, caudate nucleus, cerebellum, cerebral cortex, frontal lobe, hippocampus, medulla oblongata, occipital lobe, putamen, substantia nigra, temporal lobe, thalamus, nucleus accumbens and spinal cord) and increased expression in testis and thymus.</text>
</comment>
<comment type="PTM">
    <text evidence="8">Phosphorylated on serine and/or threonine residues, but not on tyrosine residues.</text>
</comment>
<comment type="disease" evidence="5 8 10 11 12">
    <disease id="DI-01064">
        <name>Spinocerebellar ataxia, autosomal recessive, with axonal neuropathy 1</name>
        <acronym>SCAN1</acronym>
        <description>A form of spinocerebellar ataxia, a clinically and genetically heterogeneous group of cerebellar disorders. Patients show progressive incoordination of gait and often poor coordination of hands, speech and eye movements, due to degeneration of the cerebellum with variable involvement of the brainstem and spinal cord. SCAN1 is an autosomal recessive cerebellar ataxia (ARCA) associated with peripheral axonal motor and sensory neuropathy, distal muscular atrophy, pes cavus and steppage gait as seen in Charcot-Marie-Tooth neuropathy. All affected individuals have normal intelligence.</description>
        <dbReference type="MIM" id="607250"/>
    </disease>
    <text>The disease is caused by variants affecting the gene represented in this entry.</text>
</comment>
<comment type="similarity">
    <text evidence="16">Belongs to the tyrosyl-DNA phosphodiesterase family.</text>
</comment>
<protein>
    <recommendedName>
        <fullName>Tyrosyl-DNA phosphodiesterase 1</fullName>
        <shortName>Tyr-DNA phosphodiesterase 1</shortName>
        <ecNumber evidence="7 11 13">3.1.4.-</ecNumber>
    </recommendedName>
</protein>
<accession>Q9NUW8</accession>
<accession>Q2HXX4</accession>
<accession>Q86TV8</accession>
<accession>Q96BK7</accession>
<accession>Q9NZM7</accession>
<accession>Q9NZM8</accession>
<gene>
    <name type="primary">TDP1</name>
</gene>
<reference key="1">
    <citation type="submission" date="2003-07" db="EMBL/GenBank/DDBJ databases">
        <title>Full-length cDNA libraries and normalization.</title>
        <authorList>
            <person name="Li W.B."/>
            <person name="Gruber C."/>
            <person name="Jessee J."/>
            <person name="Polayes D."/>
        </authorList>
    </citation>
    <scope>NUCLEOTIDE SEQUENCE [LARGE SCALE MRNA] (ISOFORM 2)</scope>
    <source>
        <tissue>Placenta</tissue>
    </source>
</reference>
<reference key="2">
    <citation type="journal article" date="2004" name="Nat. Genet.">
        <title>Complete sequencing and characterization of 21,243 full-length human cDNAs.</title>
        <authorList>
            <person name="Ota T."/>
            <person name="Suzuki Y."/>
            <person name="Nishikawa T."/>
            <person name="Otsuki T."/>
            <person name="Sugiyama T."/>
            <person name="Irie R."/>
            <person name="Wakamatsu A."/>
            <person name="Hayashi K."/>
            <person name="Sato H."/>
            <person name="Nagai K."/>
            <person name="Kimura K."/>
            <person name="Makita H."/>
            <person name="Sekine M."/>
            <person name="Obayashi M."/>
            <person name="Nishi T."/>
            <person name="Shibahara T."/>
            <person name="Tanaka T."/>
            <person name="Ishii S."/>
            <person name="Yamamoto J."/>
            <person name="Saito K."/>
            <person name="Kawai Y."/>
            <person name="Isono Y."/>
            <person name="Nakamura Y."/>
            <person name="Nagahari K."/>
            <person name="Murakami K."/>
            <person name="Yasuda T."/>
            <person name="Iwayanagi T."/>
            <person name="Wagatsuma M."/>
            <person name="Shiratori A."/>
            <person name="Sudo H."/>
            <person name="Hosoiri T."/>
            <person name="Kaku Y."/>
            <person name="Kodaira H."/>
            <person name="Kondo H."/>
            <person name="Sugawara M."/>
            <person name="Takahashi M."/>
            <person name="Kanda K."/>
            <person name="Yokoi T."/>
            <person name="Furuya T."/>
            <person name="Kikkawa E."/>
            <person name="Omura Y."/>
            <person name="Abe K."/>
            <person name="Kamihara K."/>
            <person name="Katsuta N."/>
            <person name="Sato K."/>
            <person name="Tanikawa M."/>
            <person name="Yamazaki M."/>
            <person name="Ninomiya K."/>
            <person name="Ishibashi T."/>
            <person name="Yamashita H."/>
            <person name="Murakawa K."/>
            <person name="Fujimori K."/>
            <person name="Tanai H."/>
            <person name="Kimata M."/>
            <person name="Watanabe M."/>
            <person name="Hiraoka S."/>
            <person name="Chiba Y."/>
            <person name="Ishida S."/>
            <person name="Ono Y."/>
            <person name="Takiguchi S."/>
            <person name="Watanabe S."/>
            <person name="Yosida M."/>
            <person name="Hotuta T."/>
            <person name="Kusano J."/>
            <person name="Kanehori K."/>
            <person name="Takahashi-Fujii A."/>
            <person name="Hara H."/>
            <person name="Tanase T.-O."/>
            <person name="Nomura Y."/>
            <person name="Togiya S."/>
            <person name="Komai F."/>
            <person name="Hara R."/>
            <person name="Takeuchi K."/>
            <person name="Arita M."/>
            <person name="Imose N."/>
            <person name="Musashino K."/>
            <person name="Yuuki H."/>
            <person name="Oshima A."/>
            <person name="Sasaki N."/>
            <person name="Aotsuka S."/>
            <person name="Yoshikawa Y."/>
            <person name="Matsunawa H."/>
            <person name="Ichihara T."/>
            <person name="Shiohata N."/>
            <person name="Sano S."/>
            <person name="Moriya S."/>
            <person name="Momiyama H."/>
            <person name="Satoh N."/>
            <person name="Takami S."/>
            <person name="Terashima Y."/>
            <person name="Suzuki O."/>
            <person name="Nakagawa S."/>
            <person name="Senoh A."/>
            <person name="Mizoguchi H."/>
            <person name="Goto Y."/>
            <person name="Shimizu F."/>
            <person name="Wakebe H."/>
            <person name="Hishigaki H."/>
            <person name="Watanabe T."/>
            <person name="Sugiyama A."/>
            <person name="Takemoto M."/>
            <person name="Kawakami B."/>
            <person name="Yamazaki M."/>
            <person name="Watanabe K."/>
            <person name="Kumagai A."/>
            <person name="Itakura S."/>
            <person name="Fukuzumi Y."/>
            <person name="Fujimori Y."/>
            <person name="Komiyama M."/>
            <person name="Tashiro H."/>
            <person name="Tanigami A."/>
            <person name="Fujiwara T."/>
            <person name="Ono T."/>
            <person name="Yamada K."/>
            <person name="Fujii Y."/>
            <person name="Ozaki K."/>
            <person name="Hirao M."/>
            <person name="Ohmori Y."/>
            <person name="Kawabata A."/>
            <person name="Hikiji T."/>
            <person name="Kobatake N."/>
            <person name="Inagaki H."/>
            <person name="Ikema Y."/>
            <person name="Okamoto S."/>
            <person name="Okitani R."/>
            <person name="Kawakami T."/>
            <person name="Noguchi S."/>
            <person name="Itoh T."/>
            <person name="Shigeta K."/>
            <person name="Senba T."/>
            <person name="Matsumura K."/>
            <person name="Nakajima Y."/>
            <person name="Mizuno T."/>
            <person name="Morinaga M."/>
            <person name="Sasaki M."/>
            <person name="Togashi T."/>
            <person name="Oyama M."/>
            <person name="Hata H."/>
            <person name="Watanabe M."/>
            <person name="Komatsu T."/>
            <person name="Mizushima-Sugano J."/>
            <person name="Satoh T."/>
            <person name="Shirai Y."/>
            <person name="Takahashi Y."/>
            <person name="Nakagawa K."/>
            <person name="Okumura K."/>
            <person name="Nagase T."/>
            <person name="Nomura N."/>
            <person name="Kikuchi H."/>
            <person name="Masuho Y."/>
            <person name="Yamashita R."/>
            <person name="Nakai K."/>
            <person name="Yada T."/>
            <person name="Nakamura Y."/>
            <person name="Ohara O."/>
            <person name="Isogai T."/>
            <person name="Sugano S."/>
        </authorList>
    </citation>
    <scope>NUCLEOTIDE SEQUENCE [LARGE SCALE MRNA] (ISOFORM 1)</scope>
    <source>
        <tissue>Placenta</tissue>
    </source>
</reference>
<reference key="3">
    <citation type="submission" date="2006-01" db="EMBL/GenBank/DDBJ databases">
        <authorList>
            <consortium name="NIEHS SNPs program"/>
        </authorList>
    </citation>
    <scope>NUCLEOTIDE SEQUENCE [GENOMIC DNA]</scope>
    <scope>VARIANTS ASP-95; LEU-101; THR-134; GLY-187; GLN-304 AND ALA-569</scope>
</reference>
<reference key="4">
    <citation type="journal article" date="2003" name="Nature">
        <title>The DNA sequence and analysis of human chromosome 14.</title>
        <authorList>
            <person name="Heilig R."/>
            <person name="Eckenberg R."/>
            <person name="Petit J.-L."/>
            <person name="Fonknechten N."/>
            <person name="Da Silva C."/>
            <person name="Cattolico L."/>
            <person name="Levy M."/>
            <person name="Barbe V."/>
            <person name="De Berardinis V."/>
            <person name="Ureta-Vidal A."/>
            <person name="Pelletier E."/>
            <person name="Vico V."/>
            <person name="Anthouard V."/>
            <person name="Rowen L."/>
            <person name="Madan A."/>
            <person name="Qin S."/>
            <person name="Sun H."/>
            <person name="Du H."/>
            <person name="Pepin K."/>
            <person name="Artiguenave F."/>
            <person name="Robert C."/>
            <person name="Cruaud C."/>
            <person name="Bruels T."/>
            <person name="Jaillon O."/>
            <person name="Friedlander L."/>
            <person name="Samson G."/>
            <person name="Brottier P."/>
            <person name="Cure S."/>
            <person name="Segurens B."/>
            <person name="Aniere F."/>
            <person name="Samain S."/>
            <person name="Crespeau H."/>
            <person name="Abbasi N."/>
            <person name="Aiach N."/>
            <person name="Boscus D."/>
            <person name="Dickhoff R."/>
            <person name="Dors M."/>
            <person name="Dubois I."/>
            <person name="Friedman C."/>
            <person name="Gouyvenoux M."/>
            <person name="James R."/>
            <person name="Madan A."/>
            <person name="Mairey-Estrada B."/>
            <person name="Mangenot S."/>
            <person name="Martins N."/>
            <person name="Menard M."/>
            <person name="Oztas S."/>
            <person name="Ratcliffe A."/>
            <person name="Shaffer T."/>
            <person name="Trask B."/>
            <person name="Vacherie B."/>
            <person name="Bellemere C."/>
            <person name="Belser C."/>
            <person name="Besnard-Gonnet M."/>
            <person name="Bartol-Mavel D."/>
            <person name="Boutard M."/>
            <person name="Briez-Silla S."/>
            <person name="Combette S."/>
            <person name="Dufosse-Laurent V."/>
            <person name="Ferron C."/>
            <person name="Lechaplais C."/>
            <person name="Louesse C."/>
            <person name="Muselet D."/>
            <person name="Magdelenat G."/>
            <person name="Pateau E."/>
            <person name="Petit E."/>
            <person name="Sirvain-Trukniewicz P."/>
            <person name="Trybou A."/>
            <person name="Vega-Czarny N."/>
            <person name="Bataille E."/>
            <person name="Bluet E."/>
            <person name="Bordelais I."/>
            <person name="Dubois M."/>
            <person name="Dumont C."/>
            <person name="Guerin T."/>
            <person name="Haffray S."/>
            <person name="Hammadi R."/>
            <person name="Muanga J."/>
            <person name="Pellouin V."/>
            <person name="Robert D."/>
            <person name="Wunderle E."/>
            <person name="Gauguet G."/>
            <person name="Roy A."/>
            <person name="Sainte-Marthe L."/>
            <person name="Verdier J."/>
            <person name="Verdier-Discala C."/>
            <person name="Hillier L.W."/>
            <person name="Fulton L."/>
            <person name="McPherson J."/>
            <person name="Matsuda F."/>
            <person name="Wilson R."/>
            <person name="Scarpelli C."/>
            <person name="Gyapay G."/>
            <person name="Wincker P."/>
            <person name="Saurin W."/>
            <person name="Quetier F."/>
            <person name="Waterston R."/>
            <person name="Hood L."/>
            <person name="Weissenbach J."/>
        </authorList>
    </citation>
    <scope>NUCLEOTIDE SEQUENCE [LARGE SCALE GENOMIC DNA]</scope>
</reference>
<reference key="5">
    <citation type="journal article" date="2004" name="Genome Res.">
        <title>The status, quality, and expansion of the NIH full-length cDNA project: the Mammalian Gene Collection (MGC).</title>
        <authorList>
            <consortium name="The MGC Project Team"/>
        </authorList>
    </citation>
    <scope>NUCLEOTIDE SEQUENCE [LARGE SCALE MRNA] (ISOFORM 1)</scope>
    <source>
        <tissue>Pancreas</tissue>
    </source>
</reference>
<reference key="6">
    <citation type="journal article" date="1999" name="Science">
        <title>Yeast gene for a Tyr-DNA phosphodiesterase that repairs topoisomerase I complexes.</title>
        <authorList>
            <person name="Pouliot J.J."/>
            <person name="Yao K.C."/>
            <person name="Robertson C.A."/>
            <person name="Nash H.A."/>
        </authorList>
    </citation>
    <scope>NUCLEOTIDE SEQUENCE [MRNA] OF 6-608 (ISOFORM 1)</scope>
</reference>
<reference key="7">
    <citation type="journal article" date="2001" name="Proc. Natl. Acad. Sci. U.S.A.">
        <title>The tyrosyl-DNA phosphodiesterase Tdp1 is a member of the phospholipase D superfamily.</title>
        <authorList>
            <person name="Interthal H."/>
            <person name="Pouliot J.J."/>
            <person name="Champoux J.J."/>
        </authorList>
    </citation>
    <scope>SIMILARITY TO PHOSPHOLIPASE D SUPERFAMILY</scope>
    <scope>MUTAGENESIS OF HIS-263; LYS-265; HIS-493 AND LYS-495</scope>
</reference>
<reference key="8">
    <citation type="journal article" date="2002" name="J. Biol. Chem.">
        <title>Conversion of phosphoglycolate to phosphate termini on 3' overhangs of DNA double strand breaks by the human tyrosyl-DNA phosphodiesterase hTdp1.</title>
        <authorList>
            <person name="Inamdar K.V."/>
            <person name="Pouliot J.J."/>
            <person name="Zhou T."/>
            <person name="Lees-Miller S.P."/>
            <person name="Rasouli-Nia A."/>
            <person name="Povirk L.F."/>
        </authorList>
    </citation>
    <scope>FUNCTION</scope>
</reference>
<reference key="9">
    <citation type="journal article" date="2004" name="J. Mol. Biol.">
        <title>Analysis of human tyrosyl-DNA phosphodiesterase I catalytic residues.</title>
        <authorList>
            <person name="Raymond A.C."/>
            <person name="Rideout M.C."/>
            <person name="Staker B."/>
            <person name="Hjerrild K."/>
            <person name="Burgin A.B. Jr."/>
        </authorList>
    </citation>
    <scope>FUNCTION</scope>
    <scope>CATALYTIC ACTIVITY</scope>
    <scope>ACTIVE SITE</scope>
    <scope>ENZYME MECHANISM</scope>
    <scope>MUTAGENESIS OF HIS-263; LYS-265; ASN-283; GLN-294; HIS-493; LYS-495; ASN-516 AND GLU-538</scope>
</reference>
<reference key="10">
    <citation type="journal article" date="2005" name="J. Biol. Chem.">
        <title>Substrate specificity of tyrosyl-DNA phosphodiesterase I (Tdp1).</title>
        <authorList>
            <person name="Raymond A.C."/>
            <person name="Staker B.L."/>
            <person name="Burgin A.B. Jr."/>
        </authorList>
    </citation>
    <scope>FUNCTION</scope>
</reference>
<reference key="11">
    <citation type="journal article" date="2005" name="J. Biol. Chem.">
        <title>Human Tdp1 cleaves a broad spectrum of substrates, including phosphoamide linkages.</title>
        <authorList>
            <person name="Interthal H."/>
            <person name="Chen H.J."/>
            <person name="Champoux J.J."/>
        </authorList>
    </citation>
    <scope>FUNCTION</scope>
    <scope>CATALYTIC ACTIVITY</scope>
    <scope>CHARACTERIZATION OF VARIANT SCAN1 ARG-493</scope>
</reference>
<reference key="12">
    <citation type="journal article" date="2006" name="Cell">
        <title>Global, in vivo, and site-specific phosphorylation dynamics in signaling networks.</title>
        <authorList>
            <person name="Olsen J.V."/>
            <person name="Blagoev B."/>
            <person name="Gnad F."/>
            <person name="Macek B."/>
            <person name="Kumar C."/>
            <person name="Mortensen P."/>
            <person name="Mann M."/>
        </authorList>
    </citation>
    <scope>IDENTIFICATION BY MASS SPECTROMETRY [LARGE SCALE ANALYSIS]</scope>
    <source>
        <tissue>Cervix carcinoma</tissue>
    </source>
</reference>
<reference key="13">
    <citation type="journal article" date="2008" name="Proc. Natl. Acad. Sci. U.S.A.">
        <title>A quantitative atlas of mitotic phosphorylation.</title>
        <authorList>
            <person name="Dephoure N."/>
            <person name="Zhou C."/>
            <person name="Villen J."/>
            <person name="Beausoleil S.A."/>
            <person name="Bakalarski C.E."/>
            <person name="Elledge S.J."/>
            <person name="Gygi S.P."/>
        </authorList>
    </citation>
    <scope>PHOSPHORYLATION [LARGE SCALE ANALYSIS] AT SER-61</scope>
    <scope>IDENTIFICATION BY MASS SPECTROMETRY [LARGE SCALE ANALYSIS]</scope>
    <source>
        <tissue>Cervix carcinoma</tissue>
    </source>
</reference>
<reference key="14">
    <citation type="journal article" date="2009" name="Sci. Signal.">
        <title>Quantitative phosphoproteomic analysis of T cell receptor signaling reveals system-wide modulation of protein-protein interactions.</title>
        <authorList>
            <person name="Mayya V."/>
            <person name="Lundgren D.H."/>
            <person name="Hwang S.-I."/>
            <person name="Rezaul K."/>
            <person name="Wu L."/>
            <person name="Eng J.K."/>
            <person name="Rodionov V."/>
            <person name="Han D.K."/>
        </authorList>
    </citation>
    <scope>PHOSPHORYLATION [LARGE SCALE ANALYSIS] AT THR-147 AND SER-148</scope>
    <scope>IDENTIFICATION BY MASS SPECTROMETRY [LARGE SCALE ANALYSIS]</scope>
    <source>
        <tissue>Leukemic T-cell</tissue>
    </source>
</reference>
<reference key="15">
    <citation type="journal article" date="2011" name="BMC Syst. Biol.">
        <title>Initial characterization of the human central proteome.</title>
        <authorList>
            <person name="Burkard T.R."/>
            <person name="Planyavsky M."/>
            <person name="Kaupe I."/>
            <person name="Breitwieser F.P."/>
            <person name="Buerckstuemmer T."/>
            <person name="Bennett K.L."/>
            <person name="Superti-Furga G."/>
            <person name="Colinge J."/>
        </authorList>
    </citation>
    <scope>IDENTIFICATION BY MASS SPECTROMETRY [LARGE SCALE ANALYSIS]</scope>
</reference>
<reference key="16">
    <citation type="journal article" date="2012" name="J. Biol. Chem.">
        <title>Biochemical characterization of human Tyrosyl DNA Phosphodiesterase 2 (TDP2/TTRAP): a Mg2+/Mn2+-dependent phosphodiesterase specific for the repair of topoisomerase cleavage complexes.</title>
        <authorList>
            <person name="Gao R."/>
            <person name="Huang S.Y."/>
            <person name="Marchand C."/>
            <person name="Pommier Y."/>
        </authorList>
    </citation>
    <scope>FUNCTION</scope>
    <scope>CATALYTIC ACTIVITY</scope>
    <scope>BIOPHYSICOCHEMICAL PROPERTIES</scope>
</reference>
<reference key="17">
    <citation type="journal article" date="2013" name="J. Proteome Res.">
        <title>Toward a comprehensive characterization of a human cancer cell phosphoproteome.</title>
        <authorList>
            <person name="Zhou H."/>
            <person name="Di Palma S."/>
            <person name="Preisinger C."/>
            <person name="Peng M."/>
            <person name="Polat A.N."/>
            <person name="Heck A.J."/>
            <person name="Mohammed S."/>
        </authorList>
    </citation>
    <scope>PHOSPHORYLATION [LARGE SCALE ANALYSIS] AT SER-61</scope>
    <scope>IDENTIFICATION BY MASS SPECTROMETRY [LARGE SCALE ANALYSIS]</scope>
    <source>
        <tissue>Cervix carcinoma</tissue>
        <tissue>Erythroleukemia</tissue>
    </source>
</reference>
<reference key="18">
    <citation type="journal article" date="2002" name="J. Mol. Biol.">
        <title>Insights into substrate binding and catalytic mechanism of human tyrosyl-DNA phosphodiesterase (Tdp1) from vanadate and tungstate-inhibited structures.</title>
        <authorList>
            <person name="Davies D.R."/>
            <person name="Interthal H."/>
            <person name="Champoux J.J."/>
            <person name="Hol W.G.J."/>
        </authorList>
    </citation>
    <scope>X-RAY CRYSTALLOGRAPHY (2.0 ANGSTROMS) OF 149-608 IN COMPLEXES WITH SUBSTRATE; VANADATE AND TUNGSTATE</scope>
    <scope>ACTIVE SITE</scope>
</reference>
<reference key="19">
    <citation type="journal article" date="2002" name="Structure">
        <title>The crystal structure of human tyrosyl-DNA phosphodiesterase, Tdp1.</title>
        <authorList>
            <person name="Davies D.R."/>
            <person name="Interthal H."/>
            <person name="Champoux J.J."/>
            <person name="Hol W.G.J."/>
        </authorList>
    </citation>
    <scope>X-RAY CRYSTALLOGRAPHY (1.69 ANGSTROMS) OF 149-608</scope>
    <scope>SUBUNIT</scope>
</reference>
<reference key="20">
    <citation type="journal article" date="2003" name="Chem. Biol.">
        <title>Crystal structure of a transition state mimic for TDP1 assembled from vanadate, DNA, and a topoisomerase I-derived peptide.</title>
        <authorList>
            <person name="Davies D.R."/>
            <person name="Interthal H."/>
            <person name="Champoux J.J."/>
            <person name="Hol W.G.J."/>
        </authorList>
    </citation>
    <scope>X-RAY CRYSTALLOGRAPHY (2.03 ANGSTROMS) OF 149-608</scope>
</reference>
<reference key="21">
    <citation type="journal article" date="2004" name="J. Med. Chem.">
        <title>Explorations of peptide and oligonucleotide binding sites of tyrosyl-DNA phosphodiesterase using vanadate complexes.</title>
        <authorList>
            <person name="Davies D.R."/>
            <person name="Interthal H."/>
            <person name="Champoux J.J."/>
            <person name="Hol W.G.J."/>
        </authorList>
    </citation>
    <scope>X-RAY CRYSTALLOGRAPHY (2.3 ANGSTROMS) OF 149-608 IN COMPLEXES WITH SUBSTRATES</scope>
</reference>
<reference key="22">
    <citation type="journal article" date="2002" name="Nat. Genet.">
        <title>Mutation of TDP1, encoding a topoisomerase I-dependent DNA damage repair enzyme, in spinocerebellar ataxia with axonal neuropathy.</title>
        <authorList>
            <person name="Takashima H."/>
            <person name="Boerkoel C.F."/>
            <person name="John J."/>
            <person name="Saifi G.M."/>
            <person name="Salih M.A.M."/>
            <person name="Armstrong D."/>
            <person name="Mao Y."/>
            <person name="Quiocho F.A."/>
            <person name="Roa B.B."/>
            <person name="Nakagawa M."/>
            <person name="Stockton D.W."/>
            <person name="Lupski J.R."/>
        </authorList>
    </citation>
    <scope>VARIANT SCAN1 ARG-493</scope>
    <scope>VARIANT LEU-566</scope>
    <scope>TISSUE SPECIFICITY</scope>
</reference>
<reference key="23">
    <citation type="journal article" date="2005" name="Nucleic Acids Res.">
        <title>Deficiency in 3'-phosphoglycolate processing in human cells with a hereditary mutation in tyrosyl-DNA phosphodiesterase (TDP1).</title>
        <authorList>
            <person name="Zhou T."/>
            <person name="Lee J.W."/>
            <person name="Tatavarthi H."/>
            <person name="Lupski J.R."/>
            <person name="Valerie K."/>
            <person name="Povirk L.F."/>
        </authorList>
    </citation>
    <scope>CHARACTERIZATION OF VARIANT SCAN1 ARG-493</scope>
    <scope>SUBCELLULAR LOCATION</scope>
    <scope>PHOSPHORYLATION</scope>
</reference>
<reference key="24">
    <citation type="journal article" date="2005" name="EMBO J.">
        <title>SCAN1 mutant Tdp1 accumulates the enzyme-DNA intermediate and causes camptothecin hypersensitivity.</title>
        <authorList>
            <person name="Interthal H."/>
            <person name="Chen H.J."/>
            <person name="Kehl-Fie T.E."/>
            <person name="Zotzmann J."/>
            <person name="Leppard J.B."/>
            <person name="Champoux J.J."/>
        </authorList>
    </citation>
    <scope>CHARACTERIZATION OF VARIANT SCAN1 ARG-493</scope>
</reference>
<reference key="25">
    <citation type="journal article" date="2007" name="EMBO J.">
        <title>Spinocerebellar ataxia with axonal neuropathy: consequence of a Tdp1 recessive neomorphic mutation?</title>
        <authorList>
            <person name="Hirano R."/>
            <person name="Interthal H."/>
            <person name="Huang C."/>
            <person name="Nakamura T."/>
            <person name="Deguchi K."/>
            <person name="Choi K."/>
            <person name="Bhattacharjee M.B."/>
            <person name="Arimura K."/>
            <person name="Umehara F."/>
            <person name="Izumo S."/>
            <person name="Northrop J.L."/>
            <person name="Salih M.A.M."/>
            <person name="Inoue K."/>
            <person name="Armstrong D.L."/>
            <person name="Champoux J.J."/>
            <person name="Takashima H."/>
            <person name="Boerkoel C.F."/>
        </authorList>
    </citation>
    <scope>CHARACTERIZATION OF VARIANT SCAN1 ARG-493</scope>
    <scope>TISSUE SPECIFICITY</scope>
</reference>
<name>TYDP1_HUMAN</name>
<evidence type="ECO:0000256" key="1">
    <source>
        <dbReference type="SAM" id="MobiDB-lite"/>
    </source>
</evidence>
<evidence type="ECO:0000269" key="2">
    <source>
    </source>
</evidence>
<evidence type="ECO:0000269" key="3">
    <source>
    </source>
</evidence>
<evidence type="ECO:0000269" key="4">
    <source>
    </source>
</evidence>
<evidence type="ECO:0000269" key="5">
    <source>
    </source>
</evidence>
<evidence type="ECO:0000269" key="6">
    <source>
    </source>
</evidence>
<evidence type="ECO:0000269" key="7">
    <source>
    </source>
</evidence>
<evidence type="ECO:0000269" key="8">
    <source>
    </source>
</evidence>
<evidence type="ECO:0000269" key="9">
    <source>
    </source>
</evidence>
<evidence type="ECO:0000269" key="10">
    <source>
    </source>
</evidence>
<evidence type="ECO:0000269" key="11">
    <source>
    </source>
</evidence>
<evidence type="ECO:0000269" key="12">
    <source>
    </source>
</evidence>
<evidence type="ECO:0000269" key="13">
    <source>
    </source>
</evidence>
<evidence type="ECO:0000269" key="14">
    <source ref="3"/>
</evidence>
<evidence type="ECO:0000303" key="15">
    <source ref="1"/>
</evidence>
<evidence type="ECO:0000305" key="16"/>
<evidence type="ECO:0007744" key="17">
    <source>
    </source>
</evidence>
<evidence type="ECO:0007744" key="18">
    <source>
    </source>
</evidence>
<evidence type="ECO:0007744" key="19">
    <source>
    </source>
</evidence>
<evidence type="ECO:0007829" key="20">
    <source>
        <dbReference type="PDB" id="1JY1"/>
    </source>
</evidence>
<evidence type="ECO:0007829" key="21">
    <source>
        <dbReference type="PDB" id="1RGU"/>
    </source>
</evidence>
<evidence type="ECO:0007829" key="22">
    <source>
        <dbReference type="PDB" id="5NWA"/>
    </source>
</evidence>
<evidence type="ECO:0007829" key="23">
    <source>
        <dbReference type="PDB" id="6MZ0"/>
    </source>
</evidence>
<evidence type="ECO:0007829" key="24">
    <source>
        <dbReference type="PDB" id="6N0D"/>
    </source>
</evidence>
<evidence type="ECO:0007829" key="25">
    <source>
        <dbReference type="PDB" id="6W4R"/>
    </source>
</evidence>
<evidence type="ECO:0007829" key="26">
    <source>
        <dbReference type="PDB" id="7UFY"/>
    </source>
</evidence>